<name>RNC_THEFY</name>
<accession>Q47S78</accession>
<comment type="function">
    <text evidence="1">Digests double-stranded RNA. Involved in the processing of primary rRNA transcript to yield the immediate precursors to the large and small rRNAs (23S and 16S). Processes some mRNAs, and tRNAs when they are encoded in the rRNA operon. Processes pre-crRNA and tracrRNA of type II CRISPR loci if present in the organism.</text>
</comment>
<comment type="catalytic activity">
    <reaction evidence="1">
        <text>Endonucleolytic cleavage to 5'-phosphomonoester.</text>
        <dbReference type="EC" id="3.1.26.3"/>
    </reaction>
</comment>
<comment type="cofactor">
    <cofactor evidence="1">
        <name>Mg(2+)</name>
        <dbReference type="ChEBI" id="CHEBI:18420"/>
    </cofactor>
</comment>
<comment type="subunit">
    <text evidence="1">Homodimer.</text>
</comment>
<comment type="subcellular location">
    <subcellularLocation>
        <location evidence="1">Cytoplasm</location>
    </subcellularLocation>
</comment>
<comment type="similarity">
    <text evidence="1">Belongs to the ribonuclease III family.</text>
</comment>
<feature type="chain" id="PRO_0000228596" description="Ribonuclease 3">
    <location>
        <begin position="1"/>
        <end position="240"/>
    </location>
</feature>
<feature type="domain" description="RNase III" evidence="1">
    <location>
        <begin position="10"/>
        <end position="136"/>
    </location>
</feature>
<feature type="domain" description="DRBM" evidence="1">
    <location>
        <begin position="163"/>
        <end position="231"/>
    </location>
</feature>
<feature type="region of interest" description="Disordered" evidence="2">
    <location>
        <begin position="205"/>
        <end position="240"/>
    </location>
</feature>
<feature type="compositionally biased region" description="Low complexity" evidence="2">
    <location>
        <begin position="219"/>
        <end position="228"/>
    </location>
</feature>
<feature type="active site" evidence="1">
    <location>
        <position position="53"/>
    </location>
</feature>
<feature type="active site" evidence="1">
    <location>
        <position position="125"/>
    </location>
</feature>
<feature type="binding site" evidence="1">
    <location>
        <position position="49"/>
    </location>
    <ligand>
        <name>Mg(2+)</name>
        <dbReference type="ChEBI" id="CHEBI:18420"/>
    </ligand>
</feature>
<feature type="binding site" evidence="1">
    <location>
        <position position="122"/>
    </location>
    <ligand>
        <name>Mg(2+)</name>
        <dbReference type="ChEBI" id="CHEBI:18420"/>
    </ligand>
</feature>
<feature type="binding site" evidence="1">
    <location>
        <position position="125"/>
    </location>
    <ligand>
        <name>Mg(2+)</name>
        <dbReference type="ChEBI" id="CHEBI:18420"/>
    </ligand>
</feature>
<proteinExistence type="inferred from homology"/>
<dbReference type="EC" id="3.1.26.3" evidence="1"/>
<dbReference type="EMBL" id="CP000088">
    <property type="protein sequence ID" value="AAZ54689.1"/>
    <property type="molecule type" value="Genomic_DNA"/>
</dbReference>
<dbReference type="RefSeq" id="WP_011291098.1">
    <property type="nucleotide sequence ID" value="NC_007333.1"/>
</dbReference>
<dbReference type="SMR" id="Q47S78"/>
<dbReference type="STRING" id="269800.Tfu_0651"/>
<dbReference type="KEGG" id="tfu:Tfu_0651"/>
<dbReference type="eggNOG" id="COG0571">
    <property type="taxonomic scope" value="Bacteria"/>
</dbReference>
<dbReference type="HOGENOM" id="CLU_000907_1_3_11"/>
<dbReference type="OrthoDB" id="9805026at2"/>
<dbReference type="GO" id="GO:0005737">
    <property type="term" value="C:cytoplasm"/>
    <property type="evidence" value="ECO:0007669"/>
    <property type="project" value="UniProtKB-SubCell"/>
</dbReference>
<dbReference type="GO" id="GO:0003725">
    <property type="term" value="F:double-stranded RNA binding"/>
    <property type="evidence" value="ECO:0007669"/>
    <property type="project" value="TreeGrafter"/>
</dbReference>
<dbReference type="GO" id="GO:0046872">
    <property type="term" value="F:metal ion binding"/>
    <property type="evidence" value="ECO:0007669"/>
    <property type="project" value="UniProtKB-KW"/>
</dbReference>
<dbReference type="GO" id="GO:0004525">
    <property type="term" value="F:ribonuclease III activity"/>
    <property type="evidence" value="ECO:0007669"/>
    <property type="project" value="UniProtKB-UniRule"/>
</dbReference>
<dbReference type="GO" id="GO:0019843">
    <property type="term" value="F:rRNA binding"/>
    <property type="evidence" value="ECO:0007669"/>
    <property type="project" value="UniProtKB-KW"/>
</dbReference>
<dbReference type="GO" id="GO:0006397">
    <property type="term" value="P:mRNA processing"/>
    <property type="evidence" value="ECO:0007669"/>
    <property type="project" value="UniProtKB-UniRule"/>
</dbReference>
<dbReference type="GO" id="GO:0010468">
    <property type="term" value="P:regulation of gene expression"/>
    <property type="evidence" value="ECO:0007669"/>
    <property type="project" value="TreeGrafter"/>
</dbReference>
<dbReference type="GO" id="GO:0006364">
    <property type="term" value="P:rRNA processing"/>
    <property type="evidence" value="ECO:0007669"/>
    <property type="project" value="UniProtKB-UniRule"/>
</dbReference>
<dbReference type="GO" id="GO:0008033">
    <property type="term" value="P:tRNA processing"/>
    <property type="evidence" value="ECO:0007669"/>
    <property type="project" value="UniProtKB-KW"/>
</dbReference>
<dbReference type="CDD" id="cd10845">
    <property type="entry name" value="DSRM_RNAse_III_family"/>
    <property type="match status" value="1"/>
</dbReference>
<dbReference type="CDD" id="cd00593">
    <property type="entry name" value="RIBOc"/>
    <property type="match status" value="1"/>
</dbReference>
<dbReference type="FunFam" id="1.10.1520.10:FF:000001">
    <property type="entry name" value="Ribonuclease 3"/>
    <property type="match status" value="1"/>
</dbReference>
<dbReference type="FunFam" id="3.30.160.20:FF:000003">
    <property type="entry name" value="Ribonuclease 3"/>
    <property type="match status" value="1"/>
</dbReference>
<dbReference type="Gene3D" id="3.30.160.20">
    <property type="match status" value="1"/>
</dbReference>
<dbReference type="Gene3D" id="1.10.1520.10">
    <property type="entry name" value="Ribonuclease III domain"/>
    <property type="match status" value="1"/>
</dbReference>
<dbReference type="HAMAP" id="MF_00104">
    <property type="entry name" value="RNase_III"/>
    <property type="match status" value="1"/>
</dbReference>
<dbReference type="InterPro" id="IPR014720">
    <property type="entry name" value="dsRBD_dom"/>
</dbReference>
<dbReference type="InterPro" id="IPR011907">
    <property type="entry name" value="RNase_III"/>
</dbReference>
<dbReference type="InterPro" id="IPR000999">
    <property type="entry name" value="RNase_III_dom"/>
</dbReference>
<dbReference type="InterPro" id="IPR036389">
    <property type="entry name" value="RNase_III_sf"/>
</dbReference>
<dbReference type="NCBIfam" id="TIGR02191">
    <property type="entry name" value="RNaseIII"/>
    <property type="match status" value="1"/>
</dbReference>
<dbReference type="PANTHER" id="PTHR11207:SF0">
    <property type="entry name" value="RIBONUCLEASE 3"/>
    <property type="match status" value="1"/>
</dbReference>
<dbReference type="PANTHER" id="PTHR11207">
    <property type="entry name" value="RIBONUCLEASE III"/>
    <property type="match status" value="1"/>
</dbReference>
<dbReference type="Pfam" id="PF00035">
    <property type="entry name" value="dsrm"/>
    <property type="match status" value="1"/>
</dbReference>
<dbReference type="Pfam" id="PF14622">
    <property type="entry name" value="Ribonucleas_3_3"/>
    <property type="match status" value="1"/>
</dbReference>
<dbReference type="SMART" id="SM00358">
    <property type="entry name" value="DSRM"/>
    <property type="match status" value="1"/>
</dbReference>
<dbReference type="SMART" id="SM00535">
    <property type="entry name" value="RIBOc"/>
    <property type="match status" value="1"/>
</dbReference>
<dbReference type="SUPFAM" id="SSF54768">
    <property type="entry name" value="dsRNA-binding domain-like"/>
    <property type="match status" value="1"/>
</dbReference>
<dbReference type="SUPFAM" id="SSF69065">
    <property type="entry name" value="RNase III domain-like"/>
    <property type="match status" value="1"/>
</dbReference>
<dbReference type="PROSITE" id="PS50137">
    <property type="entry name" value="DS_RBD"/>
    <property type="match status" value="1"/>
</dbReference>
<dbReference type="PROSITE" id="PS00517">
    <property type="entry name" value="RNASE_3_1"/>
    <property type="match status" value="1"/>
</dbReference>
<dbReference type="PROSITE" id="PS50142">
    <property type="entry name" value="RNASE_3_2"/>
    <property type="match status" value="1"/>
</dbReference>
<reference key="1">
    <citation type="journal article" date="2007" name="J. Bacteriol.">
        <title>Genome sequence and analysis of the soil cellulolytic actinomycete Thermobifida fusca YX.</title>
        <authorList>
            <person name="Lykidis A."/>
            <person name="Mavromatis K."/>
            <person name="Ivanova N."/>
            <person name="Anderson I."/>
            <person name="Land M."/>
            <person name="DiBartolo G."/>
            <person name="Martinez M."/>
            <person name="Lapidus A."/>
            <person name="Lucas S."/>
            <person name="Copeland A."/>
            <person name="Richardson P."/>
            <person name="Wilson D.B."/>
            <person name="Kyrpides N."/>
        </authorList>
    </citation>
    <scope>NUCLEOTIDE SEQUENCE [LARGE SCALE GENOMIC DNA]</scope>
    <source>
        <strain>YX</strain>
    </source>
</reference>
<keyword id="KW-0963">Cytoplasm</keyword>
<keyword id="KW-0255">Endonuclease</keyword>
<keyword id="KW-0378">Hydrolase</keyword>
<keyword id="KW-0460">Magnesium</keyword>
<keyword id="KW-0479">Metal-binding</keyword>
<keyword id="KW-0507">mRNA processing</keyword>
<keyword id="KW-0540">Nuclease</keyword>
<keyword id="KW-0694">RNA-binding</keyword>
<keyword id="KW-0698">rRNA processing</keyword>
<keyword id="KW-0699">rRNA-binding</keyword>
<keyword id="KW-0819">tRNA processing</keyword>
<gene>
    <name evidence="1" type="primary">rnc</name>
    <name type="ordered locus">Tfu_0651</name>
</gene>
<protein>
    <recommendedName>
        <fullName evidence="1">Ribonuclease 3</fullName>
        <ecNumber evidence="1">3.1.26.3</ecNumber>
    </recommendedName>
    <alternativeName>
        <fullName evidence="1">Ribonuclease III</fullName>
        <shortName evidence="1">RNase III</shortName>
    </alternativeName>
</protein>
<evidence type="ECO:0000255" key="1">
    <source>
        <dbReference type="HAMAP-Rule" id="MF_00104"/>
    </source>
</evidence>
<evidence type="ECO:0000256" key="2">
    <source>
        <dbReference type="SAM" id="MobiDB-lite"/>
    </source>
</evidence>
<organism>
    <name type="scientific">Thermobifida fusca (strain YX)</name>
    <dbReference type="NCBI Taxonomy" id="269800"/>
    <lineage>
        <taxon>Bacteria</taxon>
        <taxon>Bacillati</taxon>
        <taxon>Actinomycetota</taxon>
        <taxon>Actinomycetes</taxon>
        <taxon>Streptosporangiales</taxon>
        <taxon>Nocardiopsidaceae</taxon>
        <taxon>Thermobifida</taxon>
    </lineage>
</organism>
<sequence>MGTQLSPAEVREFQETVGVEIAPDILTRALTHRSYAYENGGLPTNERLEFLGDSVLGLVVTDTLYRTHPDLSEGQLAKLRAAVVNMRALADVARELGIGRYVRLGRGEEATGGRDKSSILADTLEALIGAVYLDRGLDEASELVHRLFDPLIARASGLGAGLDWKTSLQELTAAELLGVPEYVVEESGPDHQKTFRATVRVAGQTYGSGEGRSKKEAEQQAAESAWKAIRAATEKAKQES</sequence>